<sequence>MRKPTALIILDGFGLREETYGNAVAQAKKPNFDGYWNKFPHTTLTACGEAVGLPEGQMGNSEVGHLNIGAGRIVYQSLTRVNVAIREGEFDKNETFQSAIKSVKEKGTALHLFGLLSDGGVHSHMNHMFALLRLAAKEGVEKVYIHAFLDGRDVGPKTAQSYIDATNEVIKETGVGQFATISGRYYSMDRDKRWDRVEKCYRAMVNGEGPTYKSAEECVEDSYANGIYDEFVLPSVIVNEDNTPVATINDDDAVIFYNFRPDRAIQIARVFTNGDFREFDRGEKVPHIPEFVCMTHFSETVDGYVAFKPMNLDNTLGEVVAQAGLKQLRIAETEKYPHVTFFFSGGREAEFPGEERILINSPKVATYDLKPEMSIYEVTDALVNEIENDKHDVIILNFANCDMVGHSGMMEPTIKAVEATDECLGKVVEAILAKDGVALITADHGNADEELTSEGEPMTAHTTNPVPFIVTKNDVELREDGILGDIAPTMLTLLGVEQPKEMTGKTIIK</sequence>
<dbReference type="EC" id="5.4.2.12" evidence="2"/>
<dbReference type="EMBL" id="AE016879">
    <property type="protein sequence ID" value="AAP29025.1"/>
    <property type="molecule type" value="Genomic_DNA"/>
</dbReference>
<dbReference type="EMBL" id="AE017334">
    <property type="protein sequence ID" value="AAT34499.1"/>
    <property type="molecule type" value="Genomic_DNA"/>
</dbReference>
<dbReference type="EMBL" id="AE017225">
    <property type="protein sequence ID" value="AAT57275.1"/>
    <property type="molecule type" value="Genomic_DNA"/>
</dbReference>
<dbReference type="RefSeq" id="NP_847539.1">
    <property type="nucleotide sequence ID" value="NC_003997.3"/>
</dbReference>
<dbReference type="RefSeq" id="WP_001231153.1">
    <property type="nucleotide sequence ID" value="NZ_WXXJ01000012.1"/>
</dbReference>
<dbReference type="RefSeq" id="YP_031225.1">
    <property type="nucleotide sequence ID" value="NC_005945.1"/>
</dbReference>
<dbReference type="PDB" id="2IFY">
    <property type="method" value="X-ray"/>
    <property type="resolution" value="2.38 A"/>
    <property type="chains" value="A=2-509"/>
</dbReference>
<dbReference type="PDBsum" id="2IFY"/>
<dbReference type="SMR" id="Q81X77"/>
<dbReference type="IntAct" id="Q81X77">
    <property type="interactions" value="16"/>
</dbReference>
<dbReference type="STRING" id="261594.GBAA_5365"/>
<dbReference type="DNASU" id="1084903"/>
<dbReference type="GeneID" id="45024968"/>
<dbReference type="KEGG" id="ban:BA_5365"/>
<dbReference type="KEGG" id="bar:GBAA_5365"/>
<dbReference type="KEGG" id="bat:BAS4986"/>
<dbReference type="PATRIC" id="fig|198094.11.peg.5324"/>
<dbReference type="eggNOG" id="COG0696">
    <property type="taxonomic scope" value="Bacteria"/>
</dbReference>
<dbReference type="HOGENOM" id="CLU_026099_2_0_9"/>
<dbReference type="OMA" id="FMDGRDT"/>
<dbReference type="OrthoDB" id="9800863at2"/>
<dbReference type="BRENDA" id="5.4.2.12">
    <property type="organism ID" value="634"/>
</dbReference>
<dbReference type="UniPathway" id="UPA00109">
    <property type="reaction ID" value="UER00186"/>
</dbReference>
<dbReference type="EvolutionaryTrace" id="Q81X77"/>
<dbReference type="Proteomes" id="UP000000427">
    <property type="component" value="Chromosome"/>
</dbReference>
<dbReference type="Proteomes" id="UP000000594">
    <property type="component" value="Chromosome"/>
</dbReference>
<dbReference type="GO" id="GO:0005829">
    <property type="term" value="C:cytosol"/>
    <property type="evidence" value="ECO:0007669"/>
    <property type="project" value="TreeGrafter"/>
</dbReference>
<dbReference type="GO" id="GO:0030145">
    <property type="term" value="F:manganese ion binding"/>
    <property type="evidence" value="ECO:0000314"/>
    <property type="project" value="UniProtKB"/>
</dbReference>
<dbReference type="GO" id="GO:0004619">
    <property type="term" value="F:phosphoglycerate mutase activity"/>
    <property type="evidence" value="ECO:0000314"/>
    <property type="project" value="UniProtKB"/>
</dbReference>
<dbReference type="GO" id="GO:0006007">
    <property type="term" value="P:glucose catabolic process"/>
    <property type="evidence" value="ECO:0007669"/>
    <property type="project" value="InterPro"/>
</dbReference>
<dbReference type="GO" id="GO:0006096">
    <property type="term" value="P:glycolytic process"/>
    <property type="evidence" value="ECO:0007669"/>
    <property type="project" value="UniProtKB-UniRule"/>
</dbReference>
<dbReference type="GO" id="GO:0043937">
    <property type="term" value="P:regulation of sporulation"/>
    <property type="evidence" value="ECO:0000314"/>
    <property type="project" value="UniProtKB"/>
</dbReference>
<dbReference type="GO" id="GO:0030435">
    <property type="term" value="P:sporulation resulting in formation of a cellular spore"/>
    <property type="evidence" value="ECO:0007669"/>
    <property type="project" value="UniProtKB-KW"/>
</dbReference>
<dbReference type="CDD" id="cd16010">
    <property type="entry name" value="iPGM"/>
    <property type="match status" value="1"/>
</dbReference>
<dbReference type="FunFam" id="3.40.1450.10:FF:000001">
    <property type="entry name" value="2,3-bisphosphoglycerate-independent phosphoglycerate mutase"/>
    <property type="match status" value="1"/>
</dbReference>
<dbReference type="FunFam" id="3.40.720.10:FF:000001">
    <property type="entry name" value="2,3-bisphosphoglycerate-independent phosphoglycerate mutase"/>
    <property type="match status" value="1"/>
</dbReference>
<dbReference type="Gene3D" id="3.40.720.10">
    <property type="entry name" value="Alkaline Phosphatase, subunit A"/>
    <property type="match status" value="1"/>
</dbReference>
<dbReference type="Gene3D" id="3.40.1450.10">
    <property type="entry name" value="BPG-independent phosphoglycerate mutase, domain B"/>
    <property type="match status" value="1"/>
</dbReference>
<dbReference type="HAMAP" id="MF_01038">
    <property type="entry name" value="GpmI"/>
    <property type="match status" value="1"/>
</dbReference>
<dbReference type="InterPro" id="IPR017850">
    <property type="entry name" value="Alkaline_phosphatase_core_sf"/>
</dbReference>
<dbReference type="InterPro" id="IPR011258">
    <property type="entry name" value="BPG-indep_PGM_N"/>
</dbReference>
<dbReference type="InterPro" id="IPR006124">
    <property type="entry name" value="Metalloenzyme"/>
</dbReference>
<dbReference type="InterPro" id="IPR036646">
    <property type="entry name" value="PGAM_B_sf"/>
</dbReference>
<dbReference type="InterPro" id="IPR005995">
    <property type="entry name" value="Pgm_bpd_ind"/>
</dbReference>
<dbReference type="NCBIfam" id="TIGR01307">
    <property type="entry name" value="pgm_bpd_ind"/>
    <property type="match status" value="1"/>
</dbReference>
<dbReference type="PANTHER" id="PTHR31637">
    <property type="entry name" value="2,3-BISPHOSPHOGLYCERATE-INDEPENDENT PHOSPHOGLYCERATE MUTASE"/>
    <property type="match status" value="1"/>
</dbReference>
<dbReference type="PANTHER" id="PTHR31637:SF0">
    <property type="entry name" value="2,3-BISPHOSPHOGLYCERATE-INDEPENDENT PHOSPHOGLYCERATE MUTASE"/>
    <property type="match status" value="1"/>
</dbReference>
<dbReference type="Pfam" id="PF06415">
    <property type="entry name" value="iPGM_N"/>
    <property type="match status" value="1"/>
</dbReference>
<dbReference type="Pfam" id="PF01676">
    <property type="entry name" value="Metalloenzyme"/>
    <property type="match status" value="1"/>
</dbReference>
<dbReference type="PIRSF" id="PIRSF001492">
    <property type="entry name" value="IPGAM"/>
    <property type="match status" value="1"/>
</dbReference>
<dbReference type="SUPFAM" id="SSF64158">
    <property type="entry name" value="2,3-Bisphosphoglycerate-independent phosphoglycerate mutase, substrate-binding domain"/>
    <property type="match status" value="1"/>
</dbReference>
<dbReference type="SUPFAM" id="SSF53649">
    <property type="entry name" value="Alkaline phosphatase-like"/>
    <property type="match status" value="1"/>
</dbReference>
<protein>
    <recommendedName>
        <fullName evidence="3">2,3-bisphosphoglycerate-independent phosphoglycerate mutase</fullName>
        <shortName evidence="3">BPG-independent PGAM</shortName>
        <shortName evidence="3">Phosphoglyceromutase</shortName>
        <shortName evidence="3">iPGM</shortName>
        <ecNumber evidence="2">5.4.2.12</ecNumber>
    </recommendedName>
</protein>
<comment type="function">
    <text evidence="2">Essential for rapid growth and for sporulation. Catalyzes the interconversion of 2-phosphoglycerate and 3-phosphoglycerate.</text>
</comment>
<comment type="catalytic activity">
    <reaction evidence="2">
        <text>(2R)-2-phosphoglycerate = (2R)-3-phosphoglycerate</text>
        <dbReference type="Rhea" id="RHEA:15901"/>
        <dbReference type="ChEBI" id="CHEBI:58272"/>
        <dbReference type="ChEBI" id="CHEBI:58289"/>
        <dbReference type="EC" id="5.4.2.12"/>
    </reaction>
</comment>
<comment type="cofactor">
    <cofactor evidence="2">
        <name>Mn(2+)</name>
        <dbReference type="ChEBI" id="CHEBI:29035"/>
    </cofactor>
    <text evidence="2">Binds 2 manganese ions per subunit.</text>
</comment>
<comment type="pathway">
    <text evidence="1">Carbohydrate degradation; glycolysis; pyruvate from D-glyceraldehyde 3-phosphate: step 3/5.</text>
</comment>
<comment type="subunit">
    <text evidence="1">Monomer.</text>
</comment>
<comment type="similarity">
    <text evidence="1">Belongs to the BPG-independent phosphoglycerate mutase family.</text>
</comment>
<feature type="chain" id="PRO_0000212119" description="2,3-bisphosphoglycerate-independent phosphoglycerate mutase">
    <location>
        <begin position="1"/>
        <end position="509"/>
    </location>
</feature>
<feature type="active site" description="Phosphoserine intermediate" evidence="2">
    <location>
        <position position="61"/>
    </location>
</feature>
<feature type="binding site" evidence="2">
    <location>
        <position position="11"/>
    </location>
    <ligand>
        <name>Mn(2+)</name>
        <dbReference type="ChEBI" id="CHEBI:29035"/>
        <label>2</label>
    </ligand>
</feature>
<feature type="binding site" evidence="2">
    <location>
        <position position="61"/>
    </location>
    <ligand>
        <name>Mn(2+)</name>
        <dbReference type="ChEBI" id="CHEBI:29035"/>
        <label>2</label>
    </ligand>
</feature>
<feature type="binding site" evidence="1">
    <location>
        <position position="122"/>
    </location>
    <ligand>
        <name>substrate</name>
    </ligand>
</feature>
<feature type="binding site" evidence="1">
    <location>
        <begin position="152"/>
        <end position="153"/>
    </location>
    <ligand>
        <name>substrate</name>
    </ligand>
</feature>
<feature type="binding site" evidence="1">
    <location>
        <position position="184"/>
    </location>
    <ligand>
        <name>substrate</name>
    </ligand>
</feature>
<feature type="binding site" evidence="1">
    <location>
        <position position="190"/>
    </location>
    <ligand>
        <name>substrate</name>
    </ligand>
</feature>
<feature type="binding site" evidence="1">
    <location>
        <begin position="260"/>
        <end position="263"/>
    </location>
    <ligand>
        <name>substrate</name>
    </ligand>
</feature>
<feature type="binding site" evidence="1">
    <location>
        <position position="335"/>
    </location>
    <ligand>
        <name>substrate</name>
    </ligand>
</feature>
<feature type="binding site" evidence="2">
    <location>
        <position position="402"/>
    </location>
    <ligand>
        <name>Mn(2+)</name>
        <dbReference type="ChEBI" id="CHEBI:29035"/>
        <label>1</label>
    </ligand>
</feature>
<feature type="binding site" evidence="2">
    <location>
        <position position="406"/>
    </location>
    <ligand>
        <name>Mn(2+)</name>
        <dbReference type="ChEBI" id="CHEBI:29035"/>
        <label>1</label>
    </ligand>
</feature>
<feature type="binding site" evidence="2">
    <location>
        <position position="443"/>
    </location>
    <ligand>
        <name>Mn(2+)</name>
        <dbReference type="ChEBI" id="CHEBI:29035"/>
        <label>2</label>
    </ligand>
</feature>
<feature type="binding site" evidence="2">
    <location>
        <position position="444"/>
    </location>
    <ligand>
        <name>Mn(2+)</name>
        <dbReference type="ChEBI" id="CHEBI:29035"/>
        <label>2</label>
    </ligand>
</feature>
<feature type="binding site" evidence="2">
    <location>
        <position position="461"/>
    </location>
    <ligand>
        <name>Mn(2+)</name>
        <dbReference type="ChEBI" id="CHEBI:29035"/>
        <label>1</label>
    </ligand>
</feature>
<feature type="modified residue" description="Phosphotyrosine" evidence="1">
    <location>
        <position position="35"/>
    </location>
</feature>
<feature type="strand" evidence="4">
    <location>
        <begin position="5"/>
        <end position="9"/>
    </location>
</feature>
<feature type="turn" evidence="4">
    <location>
        <begin position="23"/>
        <end position="26"/>
    </location>
</feature>
<feature type="helix" evidence="4">
    <location>
        <begin position="30"/>
        <end position="38"/>
    </location>
</feature>
<feature type="strand" evidence="4">
    <location>
        <begin position="41"/>
        <end position="45"/>
    </location>
</feature>
<feature type="helix" evidence="4">
    <location>
        <begin position="48"/>
        <end position="51"/>
    </location>
</feature>
<feature type="helix" evidence="4">
    <location>
        <begin position="61"/>
        <end position="70"/>
    </location>
</feature>
<feature type="helix" evidence="4">
    <location>
        <begin position="77"/>
        <end position="86"/>
    </location>
</feature>
<feature type="turn" evidence="4">
    <location>
        <begin position="90"/>
        <end position="92"/>
    </location>
</feature>
<feature type="helix" evidence="4">
    <location>
        <begin position="94"/>
        <end position="106"/>
    </location>
</feature>
<feature type="strand" evidence="4">
    <location>
        <begin position="110"/>
        <end position="115"/>
    </location>
</feature>
<feature type="helix" evidence="4">
    <location>
        <begin position="125"/>
        <end position="138"/>
    </location>
</feature>
<feature type="strand" evidence="4">
    <location>
        <begin position="143"/>
        <end position="149"/>
    </location>
</feature>
<feature type="strand" evidence="4">
    <location>
        <begin position="151"/>
        <end position="154"/>
    </location>
</feature>
<feature type="helix" evidence="4">
    <location>
        <begin position="159"/>
        <end position="173"/>
    </location>
</feature>
<feature type="strand" evidence="4">
    <location>
        <begin position="177"/>
        <end position="183"/>
    </location>
</feature>
<feature type="helix" evidence="4">
    <location>
        <begin position="184"/>
        <end position="187"/>
    </location>
</feature>
<feature type="helix" evidence="4">
    <location>
        <begin position="194"/>
        <end position="205"/>
    </location>
</feature>
<feature type="strand" evidence="4">
    <location>
        <begin position="211"/>
        <end position="214"/>
    </location>
</feature>
<feature type="helix" evidence="4">
    <location>
        <begin position="215"/>
        <end position="224"/>
    </location>
</feature>
<feature type="helix" evidence="4">
    <location>
        <begin position="229"/>
        <end position="231"/>
    </location>
</feature>
<feature type="strand" evidence="4">
    <location>
        <begin position="235"/>
        <end position="238"/>
    </location>
</feature>
<feature type="strand" evidence="4">
    <location>
        <begin position="240"/>
        <end position="245"/>
    </location>
</feature>
<feature type="strand" evidence="4">
    <location>
        <begin position="253"/>
        <end position="256"/>
    </location>
</feature>
<feature type="turn" evidence="4">
    <location>
        <begin position="262"/>
        <end position="264"/>
    </location>
</feature>
<feature type="helix" evidence="4">
    <location>
        <begin position="265"/>
        <end position="272"/>
    </location>
</feature>
<feature type="strand" evidence="4">
    <location>
        <begin position="291"/>
        <end position="295"/>
    </location>
</feature>
<feature type="strand" evidence="4">
    <location>
        <begin position="303"/>
        <end position="307"/>
    </location>
</feature>
<feature type="helix" evidence="4">
    <location>
        <begin position="316"/>
        <end position="322"/>
    </location>
</feature>
<feature type="strand" evidence="4">
    <location>
        <begin position="327"/>
        <end position="332"/>
    </location>
</feature>
<feature type="helix" evidence="4">
    <location>
        <begin position="333"/>
        <end position="335"/>
    </location>
</feature>
<feature type="helix" evidence="4">
    <location>
        <begin position="336"/>
        <end position="339"/>
    </location>
</feature>
<feature type="turn" evidence="4">
    <location>
        <begin position="340"/>
        <end position="345"/>
    </location>
</feature>
<feature type="strand" evidence="4">
    <location>
        <begin position="354"/>
        <end position="359"/>
    </location>
</feature>
<feature type="strand" evidence="4">
    <location>
        <begin position="365"/>
        <end position="370"/>
    </location>
</feature>
<feature type="turn" evidence="4">
    <location>
        <begin position="371"/>
        <end position="374"/>
    </location>
</feature>
<feature type="helix" evidence="4">
    <location>
        <begin position="375"/>
        <end position="387"/>
    </location>
</feature>
<feature type="strand" evidence="4">
    <location>
        <begin position="392"/>
        <end position="397"/>
    </location>
</feature>
<feature type="helix" evidence="4">
    <location>
        <begin position="400"/>
        <end position="405"/>
    </location>
</feature>
<feature type="helix" evidence="4">
    <location>
        <begin position="410"/>
        <end position="433"/>
    </location>
</feature>
<feature type="strand" evidence="4">
    <location>
        <begin position="437"/>
        <end position="441"/>
    </location>
</feature>
<feature type="strand" evidence="4">
    <location>
        <begin position="443"/>
        <end position="445"/>
    </location>
</feature>
<feature type="strand" evidence="4">
    <location>
        <begin position="466"/>
        <end position="470"/>
    </location>
</feature>
<feature type="helix" evidence="4">
    <location>
        <begin position="483"/>
        <end position="485"/>
    </location>
</feature>
<feature type="helix" evidence="4">
    <location>
        <begin position="486"/>
        <end position="494"/>
    </location>
</feature>
<keyword id="KW-0002">3D-structure</keyword>
<keyword id="KW-0324">Glycolysis</keyword>
<keyword id="KW-0413">Isomerase</keyword>
<keyword id="KW-0464">Manganese</keyword>
<keyword id="KW-0479">Metal-binding</keyword>
<keyword id="KW-0597">Phosphoprotein</keyword>
<keyword id="KW-1185">Reference proteome</keyword>
<keyword id="KW-0749">Sporulation</keyword>
<proteinExistence type="evidence at protein level"/>
<name>GPMI_BACAN</name>
<gene>
    <name evidence="1" type="primary">gpmI</name>
    <name type="synonym">gpmA</name>
    <name type="ordered locus">BA_5365</name>
    <name type="ordered locus">GBAA_5365</name>
    <name type="ordered locus">BAS4986</name>
</gene>
<evidence type="ECO:0000255" key="1">
    <source>
        <dbReference type="HAMAP-Rule" id="MF_01038"/>
    </source>
</evidence>
<evidence type="ECO:0000269" key="2">
    <source>
    </source>
</evidence>
<evidence type="ECO:0000303" key="3">
    <source>
    </source>
</evidence>
<evidence type="ECO:0007829" key="4">
    <source>
        <dbReference type="PDB" id="2IFY"/>
    </source>
</evidence>
<organism>
    <name type="scientific">Bacillus anthracis</name>
    <dbReference type="NCBI Taxonomy" id="1392"/>
    <lineage>
        <taxon>Bacteria</taxon>
        <taxon>Bacillati</taxon>
        <taxon>Bacillota</taxon>
        <taxon>Bacilli</taxon>
        <taxon>Bacillales</taxon>
        <taxon>Bacillaceae</taxon>
        <taxon>Bacillus</taxon>
        <taxon>Bacillus cereus group</taxon>
    </lineage>
</organism>
<accession>Q81X77</accession>
<accession>Q6HR13</accession>
<accession>Q6KKD2</accession>
<reference key="1">
    <citation type="journal article" date="2003" name="Nature">
        <title>The genome sequence of Bacillus anthracis Ames and comparison to closely related bacteria.</title>
        <authorList>
            <person name="Read T.D."/>
            <person name="Peterson S.N."/>
            <person name="Tourasse N.J."/>
            <person name="Baillie L.W."/>
            <person name="Paulsen I.T."/>
            <person name="Nelson K.E."/>
            <person name="Tettelin H."/>
            <person name="Fouts D.E."/>
            <person name="Eisen J.A."/>
            <person name="Gill S.R."/>
            <person name="Holtzapple E.K."/>
            <person name="Okstad O.A."/>
            <person name="Helgason E."/>
            <person name="Rilstone J."/>
            <person name="Wu M."/>
            <person name="Kolonay J.F."/>
            <person name="Beanan M.J."/>
            <person name="Dodson R.J."/>
            <person name="Brinkac L.M."/>
            <person name="Gwinn M.L."/>
            <person name="DeBoy R.T."/>
            <person name="Madpu R."/>
            <person name="Daugherty S.C."/>
            <person name="Durkin A.S."/>
            <person name="Haft D.H."/>
            <person name="Nelson W.C."/>
            <person name="Peterson J.D."/>
            <person name="Pop M."/>
            <person name="Khouri H.M."/>
            <person name="Radune D."/>
            <person name="Benton J.L."/>
            <person name="Mahamoud Y."/>
            <person name="Jiang L."/>
            <person name="Hance I.R."/>
            <person name="Weidman J.F."/>
            <person name="Berry K.J."/>
            <person name="Plaut R.D."/>
            <person name="Wolf A.M."/>
            <person name="Watkins K.L."/>
            <person name="Nierman W.C."/>
            <person name="Hazen A."/>
            <person name="Cline R.T."/>
            <person name="Redmond C."/>
            <person name="Thwaite J.E."/>
            <person name="White O."/>
            <person name="Salzberg S.L."/>
            <person name="Thomason B."/>
            <person name="Friedlander A.M."/>
            <person name="Koehler T.M."/>
            <person name="Hanna P.C."/>
            <person name="Kolstoe A.-B."/>
            <person name="Fraser C.M."/>
        </authorList>
    </citation>
    <scope>NUCLEOTIDE SEQUENCE [LARGE SCALE GENOMIC DNA]</scope>
    <source>
        <strain>Ames / isolate Porton</strain>
    </source>
</reference>
<reference key="2">
    <citation type="journal article" date="2009" name="J. Bacteriol.">
        <title>The complete genome sequence of Bacillus anthracis Ames 'Ancestor'.</title>
        <authorList>
            <person name="Ravel J."/>
            <person name="Jiang L."/>
            <person name="Stanley S.T."/>
            <person name="Wilson M.R."/>
            <person name="Decker R.S."/>
            <person name="Read T.D."/>
            <person name="Worsham P."/>
            <person name="Keim P.S."/>
            <person name="Salzberg S.L."/>
            <person name="Fraser-Liggett C.M."/>
            <person name="Rasko D.A."/>
        </authorList>
    </citation>
    <scope>NUCLEOTIDE SEQUENCE [LARGE SCALE GENOMIC DNA]</scope>
    <source>
        <strain>Ames ancestor</strain>
    </source>
</reference>
<reference key="3">
    <citation type="submission" date="2004-01" db="EMBL/GenBank/DDBJ databases">
        <title>Complete genome sequence of Bacillus anthracis Sterne.</title>
        <authorList>
            <person name="Brettin T.S."/>
            <person name="Bruce D."/>
            <person name="Challacombe J.F."/>
            <person name="Gilna P."/>
            <person name="Han C."/>
            <person name="Hill K."/>
            <person name="Hitchcock P."/>
            <person name="Jackson P."/>
            <person name="Keim P."/>
            <person name="Longmire J."/>
            <person name="Lucas S."/>
            <person name="Okinaka R."/>
            <person name="Richardson P."/>
            <person name="Rubin E."/>
            <person name="Tice H."/>
        </authorList>
    </citation>
    <scope>NUCLEOTIDE SEQUENCE [LARGE SCALE GENOMIC DNA]</scope>
    <source>
        <strain>Sterne</strain>
    </source>
</reference>
<reference key="4">
    <citation type="journal article" date="2007" name="Biophys. J.">
        <title>Structure and molecular mechanism of Bacillus anthracis cofactor-independent phosphoglycerate mutase: a crucial enzyme for spores and growing cells of Bacillus species.</title>
        <authorList>
            <person name="Nukui M."/>
            <person name="Mello L.V."/>
            <person name="Littlejohn J.E."/>
            <person name="Setlow B."/>
            <person name="Setlow P."/>
            <person name="Kim K."/>
            <person name="Leighton T."/>
            <person name="Jedrzejas M.J."/>
        </authorList>
    </citation>
    <scope>X-RAY CRYSTALLOGRAPHY (2.38 ANGSTROMS) OF 2-509 IN COMPLEX WITH MANGANESE</scope>
    <scope>FUNCTION</scope>
    <scope>CATALYTIC ACTIVITY</scope>
    <scope>COFACTOR</scope>
    <scope>ACTIVE SITE</scope>
</reference>